<accession>Q9E6S6</accession>
<proteinExistence type="inferred from homology"/>
<gene>
    <name evidence="1" type="primary">C</name>
</gene>
<comment type="function">
    <text evidence="1">Self assembles to form an icosahedral capsid. Most capsids appear to be large particles with an icosahedral symmetry of T=4 and consist of 240 copies of capsid protein, though a fraction forms smaller T=3 particles consisting of 180 capsid proteins. Entering capsids are transported along microtubules to the nucleus. Phosphorylation of the capsid is thought to induce exposure of nuclear localization signal in the C-terminal portion of the capsid protein that allows binding to the nuclear pore complex via the importin (karyopherin-) alpha and beta. Capsids are imported in intact form through the nuclear pore into the nuclear basket, where it probably binds NUP153. Only capsids that contain the mature viral genome can release the viral DNA and capsid protein into the nucleoplasm. Immature capsids get stuck in the basket. Capsids encapsulate the pre-genomic RNA and the P protein. Pre-genomic RNA is reverse-transcribed into DNA while the capsid is still in the cytoplasm. The capsid can then either be directed to the nucleus, providing more genomes for transcription, or bud through the endoplasmic reticulum to provide new virions.</text>
</comment>
<comment type="subunit">
    <text evidence="1">Homodimerizes, then multimerizes. Interacts with cytosol exposed regions of viral L glycoprotein present in the reticulum-to-Golgi compartment. Interacts with human FLNB. Phosphorylated form interacts with host importin alpha; this interaction depends on the exposure of the NLS, which itself depends upon genome maturation and/or phosphorylation of the capsid protein. Interacts with host NUP153.</text>
</comment>
<comment type="subcellular location">
    <subcellularLocation>
        <location evidence="1">Virion</location>
    </subcellularLocation>
    <subcellularLocation>
        <location evidence="1">Host cytoplasm</location>
    </subcellularLocation>
</comment>
<comment type="alternative products">
    <event type="alternative initiation"/>
    <isoform>
        <id>Q9E6S6-1</id>
        <name>Capsid protein</name>
        <sequence type="displayed"/>
    </isoform>
    <isoform>
        <id>P0C6H2-1</id>
        <name>External core antigen</name>
        <sequence type="external"/>
    </isoform>
</comment>
<comment type="PTM">
    <text evidence="1">Phosphorylated by host SRPK1, SRPK2, and maybe protein kinase C or GAPDH. Phosphorylation is critical for pregenomic RNA packaging. Protein kinase C phosphorylation is stimulated by HBx protein and may play a role in transport of the viral genome to the nucleus at the late step during the viral replication cycle.</text>
</comment>
<comment type="similarity">
    <text evidence="1">Belongs to the orthohepadnavirus core antigen family.</text>
</comment>
<organismHost>
    <name type="scientific">Homo sapiens</name>
    <name type="common">Human</name>
    <dbReference type="NCBI Taxonomy" id="9606"/>
</organismHost>
<organismHost>
    <name type="scientific">Pan troglodytes</name>
    <name type="common">Chimpanzee</name>
    <dbReference type="NCBI Taxonomy" id="9598"/>
</organismHost>
<sequence>MDIDPYKEFGASVELLSFLPSDFFPSIRDLLDTASALYREALESPEHCSPHHTALRQAILCWGELMNLATWVGSNLEDPASRELVVSYVNVNMGLKIRQLLWFHVSCLTFGRETVLEYLVSFGVWIRTPPAYRPPNAPILSTLPETTVVRRRGRSPRRRTPSPRRRRSQSPRRRRSQSRESQC</sequence>
<name>CAPSD_HBVC0</name>
<feature type="chain" id="PRO_0000324362" description="Capsid protein">
    <location>
        <begin position="1"/>
        <end position="183"/>
    </location>
</feature>
<feature type="repeat" description="1; half-length">
    <location>
        <begin position="155"/>
        <end position="161"/>
    </location>
</feature>
<feature type="repeat" description="2">
    <location>
        <begin position="162"/>
        <end position="169"/>
    </location>
</feature>
<feature type="repeat" description="3">
    <location>
        <begin position="170"/>
        <end position="177"/>
    </location>
</feature>
<feature type="region of interest" description="Disordered" evidence="2">
    <location>
        <begin position="136"/>
        <end position="183"/>
    </location>
</feature>
<feature type="region of interest" description="3 X 8 AA repeats of S-P-R-R-R-[PR]-S-Q">
    <location>
        <begin position="155"/>
        <end position="177"/>
    </location>
</feature>
<feature type="region of interest" description="RNA binding" evidence="1">
    <location>
        <begin position="177"/>
        <end position="183"/>
    </location>
</feature>
<feature type="short sequence motif" description="Bipartite nuclear localization signal" evidence="1">
    <location>
        <begin position="158"/>
        <end position="175"/>
    </location>
</feature>
<feature type="compositionally biased region" description="Basic residues" evidence="2">
    <location>
        <begin position="149"/>
        <end position="176"/>
    </location>
</feature>
<feature type="modified residue" description="Phosphoserine; by host" evidence="1">
    <location>
        <position position="155"/>
    </location>
</feature>
<feature type="modified residue" description="Phosphoserine; by host" evidence="1">
    <location>
        <position position="162"/>
    </location>
</feature>
<feature type="modified residue" description="Phosphoserine; by host" evidence="1">
    <location>
        <position position="170"/>
    </location>
</feature>
<protein>
    <recommendedName>
        <fullName evidence="1">Capsid protein</fullName>
    </recommendedName>
    <alternativeName>
        <fullName evidence="1">Core antigen</fullName>
    </alternativeName>
    <alternativeName>
        <fullName evidence="1">Core protein</fullName>
    </alternativeName>
    <alternativeName>
        <fullName evidence="1">HBcAg</fullName>
    </alternativeName>
    <alternativeName>
        <fullName evidence="1">p21.5</fullName>
    </alternativeName>
</protein>
<evidence type="ECO:0000255" key="1">
    <source>
        <dbReference type="HAMAP-Rule" id="MF_04076"/>
    </source>
</evidence>
<evidence type="ECO:0000256" key="2">
    <source>
        <dbReference type="SAM" id="MobiDB-lite"/>
    </source>
</evidence>
<dbReference type="EMBL" id="AF241410">
    <property type="protein sequence ID" value="AAG17598.1"/>
    <property type="molecule type" value="Genomic_DNA"/>
</dbReference>
<dbReference type="SMR" id="Q9E6S6"/>
<dbReference type="Proteomes" id="UP000007920">
    <property type="component" value="Genome"/>
</dbReference>
<dbReference type="GO" id="GO:0043657">
    <property type="term" value="C:host cell"/>
    <property type="evidence" value="ECO:0007669"/>
    <property type="project" value="GOC"/>
</dbReference>
<dbReference type="GO" id="GO:0030430">
    <property type="term" value="C:host cell cytoplasm"/>
    <property type="evidence" value="ECO:0007669"/>
    <property type="project" value="UniProtKB-SubCell"/>
</dbReference>
<dbReference type="GO" id="GO:0039619">
    <property type="term" value="C:T=4 icosahedral viral capsid"/>
    <property type="evidence" value="ECO:0007669"/>
    <property type="project" value="UniProtKB-UniRule"/>
</dbReference>
<dbReference type="GO" id="GO:0003677">
    <property type="term" value="F:DNA binding"/>
    <property type="evidence" value="ECO:0007669"/>
    <property type="project" value="UniProtKB-UniRule"/>
</dbReference>
<dbReference type="GO" id="GO:0003723">
    <property type="term" value="F:RNA binding"/>
    <property type="evidence" value="ECO:0007669"/>
    <property type="project" value="UniProtKB-UniRule"/>
</dbReference>
<dbReference type="GO" id="GO:0005198">
    <property type="term" value="F:structural molecule activity"/>
    <property type="evidence" value="ECO:0007669"/>
    <property type="project" value="UniProtKB-UniRule"/>
</dbReference>
<dbReference type="GO" id="GO:0075521">
    <property type="term" value="P:microtubule-dependent intracellular transport of viral material towards nucleus"/>
    <property type="evidence" value="ECO:0007669"/>
    <property type="project" value="UniProtKB-UniRule"/>
</dbReference>
<dbReference type="GO" id="GO:0046718">
    <property type="term" value="P:symbiont entry into host cell"/>
    <property type="evidence" value="ECO:0007669"/>
    <property type="project" value="UniProtKB-UniRule"/>
</dbReference>
<dbReference type="GO" id="GO:0075732">
    <property type="term" value="P:viral penetration into host nucleus"/>
    <property type="evidence" value="ECO:0007669"/>
    <property type="project" value="UniProtKB-UniRule"/>
</dbReference>
<dbReference type="FunFam" id="1.10.4090.10:FF:000001">
    <property type="entry name" value="Capsid protein"/>
    <property type="match status" value="1"/>
</dbReference>
<dbReference type="Gene3D" id="1.10.4090.10">
    <property type="entry name" value="Viral capsid, core domain supefamily, Hepatitis B virus"/>
    <property type="match status" value="1"/>
</dbReference>
<dbReference type="HAMAP" id="MF_04076">
    <property type="entry name" value="HBV_HBEAG"/>
    <property type="match status" value="1"/>
</dbReference>
<dbReference type="InterPro" id="IPR002006">
    <property type="entry name" value="Hepatitis_core"/>
</dbReference>
<dbReference type="InterPro" id="IPR036459">
    <property type="entry name" value="Viral_capsid_core_dom_sf_HBV"/>
</dbReference>
<dbReference type="Pfam" id="PF00906">
    <property type="entry name" value="Hepatitis_core"/>
    <property type="match status" value="3"/>
</dbReference>
<dbReference type="SUPFAM" id="SSF47852">
    <property type="entry name" value="Hepatitis B viral capsid (hbcag)"/>
    <property type="match status" value="1"/>
</dbReference>
<organism>
    <name type="scientific">Hepatitis B virus genotype C (isolate Vietnam/3270/2000)</name>
    <name type="common">HBV-C</name>
    <dbReference type="NCBI Taxonomy" id="489472"/>
    <lineage>
        <taxon>Viruses</taxon>
        <taxon>Riboviria</taxon>
        <taxon>Pararnavirae</taxon>
        <taxon>Artverviricota</taxon>
        <taxon>Revtraviricetes</taxon>
        <taxon>Blubervirales</taxon>
        <taxon>Hepadnaviridae</taxon>
        <taxon>Orthohepadnavirus</taxon>
        <taxon>Hepatitis B virus</taxon>
        <taxon>hepatitis B virus genotype C</taxon>
    </lineage>
</organism>
<keyword id="KW-0024">Alternative initiation</keyword>
<keyword id="KW-0167">Capsid protein</keyword>
<keyword id="KW-1176">Cytoplasmic inwards viral transport</keyword>
<keyword id="KW-0238">DNA-binding</keyword>
<keyword id="KW-1035">Host cytoplasm</keyword>
<keyword id="KW-0945">Host-virus interaction</keyword>
<keyword id="KW-1177">Microtubular inwards viral transport</keyword>
<keyword id="KW-0597">Phosphoprotein</keyword>
<keyword id="KW-0677">Repeat</keyword>
<keyword id="KW-0694">RNA-binding</keyword>
<keyword id="KW-1144">T=4 icosahedral capsid protein</keyword>
<keyword id="KW-1163">Viral penetration into host nucleus</keyword>
<keyword id="KW-0946">Virion</keyword>
<keyword id="KW-1160">Virus entry into host cell</keyword>
<reference key="1">
    <citation type="journal article" date="2000" name="J. Gen. Virol.">
        <title>An aberrant genotype revealed in recombinant hepatitis B virus strains from Vietnam.</title>
        <authorList>
            <person name="Hannoun C."/>
            <person name="Norder H."/>
            <person name="Lindh M."/>
        </authorList>
    </citation>
    <scope>NUCLEOTIDE SEQUENCE [GENOMIC DNA]</scope>
</reference>